<feature type="chain" id="PRO_0000291540" description="Large ribosomal subunit protein uL15">
    <location>
        <begin position="1"/>
        <end position="148"/>
    </location>
</feature>
<feature type="region of interest" description="Disordered" evidence="2">
    <location>
        <begin position="1"/>
        <end position="52"/>
    </location>
</feature>
<feature type="compositionally biased region" description="Basic and acidic residues" evidence="2">
    <location>
        <begin position="1"/>
        <end position="11"/>
    </location>
</feature>
<evidence type="ECO:0000255" key="1">
    <source>
        <dbReference type="HAMAP-Rule" id="MF_01341"/>
    </source>
</evidence>
<evidence type="ECO:0000256" key="2">
    <source>
        <dbReference type="SAM" id="MobiDB-lite"/>
    </source>
</evidence>
<evidence type="ECO:0000305" key="3"/>
<dbReference type="EMBL" id="AB193033">
    <property type="protein sequence ID" value="BAD84046.1"/>
    <property type="molecule type" value="Genomic_DNA"/>
</dbReference>
<dbReference type="EMBL" id="AP009044">
    <property type="protein sequence ID" value="BAF53613.1"/>
    <property type="molecule type" value="Genomic_DNA"/>
</dbReference>
<dbReference type="RefSeq" id="WP_011013717.1">
    <property type="nucleotide sequence ID" value="NC_009342.1"/>
</dbReference>
<dbReference type="SMR" id="A4QBL6"/>
<dbReference type="GeneID" id="1021539"/>
<dbReference type="KEGG" id="cgt:cgR_0642"/>
<dbReference type="HOGENOM" id="CLU_055188_4_1_11"/>
<dbReference type="PhylomeDB" id="A4QBL6"/>
<dbReference type="Proteomes" id="UP000006698">
    <property type="component" value="Chromosome"/>
</dbReference>
<dbReference type="GO" id="GO:0022625">
    <property type="term" value="C:cytosolic large ribosomal subunit"/>
    <property type="evidence" value="ECO:0007669"/>
    <property type="project" value="TreeGrafter"/>
</dbReference>
<dbReference type="GO" id="GO:0019843">
    <property type="term" value="F:rRNA binding"/>
    <property type="evidence" value="ECO:0007669"/>
    <property type="project" value="UniProtKB-UniRule"/>
</dbReference>
<dbReference type="GO" id="GO:0003735">
    <property type="term" value="F:structural constituent of ribosome"/>
    <property type="evidence" value="ECO:0007669"/>
    <property type="project" value="InterPro"/>
</dbReference>
<dbReference type="GO" id="GO:0006412">
    <property type="term" value="P:translation"/>
    <property type="evidence" value="ECO:0007669"/>
    <property type="project" value="UniProtKB-UniRule"/>
</dbReference>
<dbReference type="FunFam" id="3.100.10.10:FF:000005">
    <property type="entry name" value="50S ribosomal protein L15"/>
    <property type="match status" value="1"/>
</dbReference>
<dbReference type="Gene3D" id="3.100.10.10">
    <property type="match status" value="1"/>
</dbReference>
<dbReference type="HAMAP" id="MF_01341">
    <property type="entry name" value="Ribosomal_uL15"/>
    <property type="match status" value="1"/>
</dbReference>
<dbReference type="InterPro" id="IPR030878">
    <property type="entry name" value="Ribosomal_uL15"/>
</dbReference>
<dbReference type="InterPro" id="IPR021131">
    <property type="entry name" value="Ribosomal_uL15/eL18"/>
</dbReference>
<dbReference type="InterPro" id="IPR036227">
    <property type="entry name" value="Ribosomal_uL15/eL18_sf"/>
</dbReference>
<dbReference type="InterPro" id="IPR005749">
    <property type="entry name" value="Ribosomal_uL15_bac-type"/>
</dbReference>
<dbReference type="InterPro" id="IPR001196">
    <property type="entry name" value="Ribosomal_uL15_CS"/>
</dbReference>
<dbReference type="NCBIfam" id="TIGR01071">
    <property type="entry name" value="rplO_bact"/>
    <property type="match status" value="1"/>
</dbReference>
<dbReference type="PANTHER" id="PTHR12934">
    <property type="entry name" value="50S RIBOSOMAL PROTEIN L15"/>
    <property type="match status" value="1"/>
</dbReference>
<dbReference type="PANTHER" id="PTHR12934:SF11">
    <property type="entry name" value="LARGE RIBOSOMAL SUBUNIT PROTEIN UL15M"/>
    <property type="match status" value="1"/>
</dbReference>
<dbReference type="Pfam" id="PF00828">
    <property type="entry name" value="Ribosomal_L27A"/>
    <property type="match status" value="1"/>
</dbReference>
<dbReference type="SUPFAM" id="SSF52080">
    <property type="entry name" value="Ribosomal proteins L15p and L18e"/>
    <property type="match status" value="1"/>
</dbReference>
<dbReference type="PROSITE" id="PS00475">
    <property type="entry name" value="RIBOSOMAL_L15"/>
    <property type="match status" value="1"/>
</dbReference>
<accession>A4QBL6</accession>
<accession>Q6M7K8</accession>
<accession>Q8NSX2</accession>
<gene>
    <name evidence="1" type="primary">rplO</name>
    <name type="ordered locus">cgR_0642</name>
</gene>
<name>RL15_CORGB</name>
<comment type="function">
    <text evidence="1">Binds to the 23S rRNA.</text>
</comment>
<comment type="subunit">
    <text evidence="1">Part of the 50S ribosomal subunit.</text>
</comment>
<comment type="similarity">
    <text evidence="1">Belongs to the universal ribosomal protein uL15 family.</text>
</comment>
<reference key="1">
    <citation type="journal article" date="2005" name="Appl. Environ. Microbiol.">
        <title>Large-scale engineering of the Corynebacterium glutamicum genome.</title>
        <authorList>
            <person name="Suzuki N."/>
            <person name="Okayama S."/>
            <person name="Nonaka H."/>
            <person name="Tsuge Y."/>
            <person name="Inui M."/>
            <person name="Yukawa H."/>
        </authorList>
    </citation>
    <scope>NUCLEOTIDE SEQUENCE [GENOMIC DNA]</scope>
</reference>
<reference key="2">
    <citation type="journal article" date="2007" name="Microbiology">
        <title>Comparative analysis of the Corynebacterium glutamicum group and complete genome sequence of strain R.</title>
        <authorList>
            <person name="Yukawa H."/>
            <person name="Omumasaba C.A."/>
            <person name="Nonaka H."/>
            <person name="Kos P."/>
            <person name="Okai N."/>
            <person name="Suzuki N."/>
            <person name="Suda M."/>
            <person name="Tsuge Y."/>
            <person name="Watanabe J."/>
            <person name="Ikeda Y."/>
            <person name="Vertes A.A."/>
            <person name="Inui M."/>
        </authorList>
    </citation>
    <scope>NUCLEOTIDE SEQUENCE [LARGE SCALE GENOMIC DNA]</scope>
    <source>
        <strain>R</strain>
    </source>
</reference>
<organism>
    <name type="scientific">Corynebacterium glutamicum (strain R)</name>
    <dbReference type="NCBI Taxonomy" id="340322"/>
    <lineage>
        <taxon>Bacteria</taxon>
        <taxon>Bacillati</taxon>
        <taxon>Actinomycetota</taxon>
        <taxon>Actinomycetes</taxon>
        <taxon>Mycobacteriales</taxon>
        <taxon>Corynebacteriaceae</taxon>
        <taxon>Corynebacterium</taxon>
    </lineage>
</organism>
<keyword id="KW-0687">Ribonucleoprotein</keyword>
<keyword id="KW-0689">Ribosomal protein</keyword>
<keyword id="KW-0694">RNA-binding</keyword>
<keyword id="KW-0699">rRNA-binding</keyword>
<protein>
    <recommendedName>
        <fullName evidence="1">Large ribosomal subunit protein uL15</fullName>
    </recommendedName>
    <alternativeName>
        <fullName evidence="3">50S ribosomal protein L15</fullName>
    </alternativeName>
</protein>
<sequence>MSEPIKLHDLRPAAGSNKAKTRVGRGEASKGKTAGRGTKGTKARKQVSAAFEGGQMPLQMRLPKLKGFKNPNKVDYQVVNIADLAEKFPQGGDVSIADIVAAGLVRKNELVKVLGNGDISVKLNVTANKFSGSAKEKIEAAGGSATVA</sequence>
<proteinExistence type="inferred from homology"/>